<feature type="chain" id="PRO_0000368574" description="ATP synthase subunit b 1">
    <location>
        <begin position="1"/>
        <end position="189"/>
    </location>
</feature>
<feature type="transmembrane region" description="Helical" evidence="1">
    <location>
        <begin position="32"/>
        <end position="52"/>
    </location>
</feature>
<name>ATPF1_MARMM</name>
<sequence>MTHAPHSEVAQHVAEAAADHADSGVFPPFDPTYFASQLFWLTIAFVILYIALDRLILPKIKTTIEDRRDRIADDLDAAAQAKADAEAAGEAYEKSLAEARNKAHALAAKTRQTLDAEIAKETAAVEAELSAKQEASEAAIRKAKDKAFAEVRGIAATATAAVVSALAGVEVSEADAGKTVDGLIKAKEA</sequence>
<proteinExistence type="inferred from homology"/>
<reference key="1">
    <citation type="submission" date="2006-08" db="EMBL/GenBank/DDBJ databases">
        <title>Complete sequence of Maricaulis maris MCS10.</title>
        <authorList>
            <consortium name="US DOE Joint Genome Institute"/>
            <person name="Copeland A."/>
            <person name="Lucas S."/>
            <person name="Lapidus A."/>
            <person name="Barry K."/>
            <person name="Detter J.C."/>
            <person name="Glavina del Rio T."/>
            <person name="Hammon N."/>
            <person name="Israni S."/>
            <person name="Dalin E."/>
            <person name="Tice H."/>
            <person name="Pitluck S."/>
            <person name="Saunders E."/>
            <person name="Brettin T."/>
            <person name="Bruce D."/>
            <person name="Han C."/>
            <person name="Tapia R."/>
            <person name="Gilna P."/>
            <person name="Schmutz J."/>
            <person name="Larimer F."/>
            <person name="Land M."/>
            <person name="Hauser L."/>
            <person name="Kyrpides N."/>
            <person name="Mikhailova N."/>
            <person name="Viollier P."/>
            <person name="Stephens C."/>
            <person name="Richardson P."/>
        </authorList>
    </citation>
    <scope>NUCLEOTIDE SEQUENCE [LARGE SCALE GENOMIC DNA]</scope>
    <source>
        <strain>MCS10</strain>
    </source>
</reference>
<dbReference type="EMBL" id="CP000449">
    <property type="protein sequence ID" value="ABI66495.1"/>
    <property type="molecule type" value="Genomic_DNA"/>
</dbReference>
<dbReference type="RefSeq" id="WP_011644140.1">
    <property type="nucleotide sequence ID" value="NC_008347.1"/>
</dbReference>
<dbReference type="SMR" id="Q0AK33"/>
<dbReference type="STRING" id="394221.Mmar10_2203"/>
<dbReference type="KEGG" id="mmr:Mmar10_2203"/>
<dbReference type="eggNOG" id="COG0711">
    <property type="taxonomic scope" value="Bacteria"/>
</dbReference>
<dbReference type="HOGENOM" id="CLU_079215_1_2_5"/>
<dbReference type="OrthoDB" id="9805716at2"/>
<dbReference type="Proteomes" id="UP000001964">
    <property type="component" value="Chromosome"/>
</dbReference>
<dbReference type="GO" id="GO:0005886">
    <property type="term" value="C:plasma membrane"/>
    <property type="evidence" value="ECO:0007669"/>
    <property type="project" value="UniProtKB-SubCell"/>
</dbReference>
<dbReference type="GO" id="GO:0045259">
    <property type="term" value="C:proton-transporting ATP synthase complex"/>
    <property type="evidence" value="ECO:0007669"/>
    <property type="project" value="UniProtKB-KW"/>
</dbReference>
<dbReference type="GO" id="GO:0046933">
    <property type="term" value="F:proton-transporting ATP synthase activity, rotational mechanism"/>
    <property type="evidence" value="ECO:0007669"/>
    <property type="project" value="UniProtKB-UniRule"/>
</dbReference>
<dbReference type="GO" id="GO:0046961">
    <property type="term" value="F:proton-transporting ATPase activity, rotational mechanism"/>
    <property type="evidence" value="ECO:0007669"/>
    <property type="project" value="TreeGrafter"/>
</dbReference>
<dbReference type="CDD" id="cd06503">
    <property type="entry name" value="ATP-synt_Fo_b"/>
    <property type="match status" value="1"/>
</dbReference>
<dbReference type="Gene3D" id="6.10.250.1580">
    <property type="match status" value="1"/>
</dbReference>
<dbReference type="HAMAP" id="MF_01398">
    <property type="entry name" value="ATP_synth_b_bprime"/>
    <property type="match status" value="1"/>
</dbReference>
<dbReference type="InterPro" id="IPR002146">
    <property type="entry name" value="ATP_synth_b/b'su_bac/chlpt"/>
</dbReference>
<dbReference type="InterPro" id="IPR050059">
    <property type="entry name" value="ATP_synthase_B_chain"/>
</dbReference>
<dbReference type="PANTHER" id="PTHR33445:SF1">
    <property type="entry name" value="ATP SYNTHASE SUBUNIT B"/>
    <property type="match status" value="1"/>
</dbReference>
<dbReference type="PANTHER" id="PTHR33445">
    <property type="entry name" value="ATP SYNTHASE SUBUNIT B', CHLOROPLASTIC"/>
    <property type="match status" value="1"/>
</dbReference>
<dbReference type="Pfam" id="PF00430">
    <property type="entry name" value="ATP-synt_B"/>
    <property type="match status" value="1"/>
</dbReference>
<evidence type="ECO:0000255" key="1">
    <source>
        <dbReference type="HAMAP-Rule" id="MF_01398"/>
    </source>
</evidence>
<organism>
    <name type="scientific">Maricaulis maris (strain MCS10)</name>
    <name type="common">Caulobacter maris</name>
    <dbReference type="NCBI Taxonomy" id="394221"/>
    <lineage>
        <taxon>Bacteria</taxon>
        <taxon>Pseudomonadati</taxon>
        <taxon>Pseudomonadota</taxon>
        <taxon>Alphaproteobacteria</taxon>
        <taxon>Maricaulales</taxon>
        <taxon>Maricaulaceae</taxon>
        <taxon>Maricaulis</taxon>
    </lineage>
</organism>
<accession>Q0AK33</accession>
<keyword id="KW-0066">ATP synthesis</keyword>
<keyword id="KW-0997">Cell inner membrane</keyword>
<keyword id="KW-1003">Cell membrane</keyword>
<keyword id="KW-0138">CF(0)</keyword>
<keyword id="KW-0375">Hydrogen ion transport</keyword>
<keyword id="KW-0406">Ion transport</keyword>
<keyword id="KW-0472">Membrane</keyword>
<keyword id="KW-1185">Reference proteome</keyword>
<keyword id="KW-0812">Transmembrane</keyword>
<keyword id="KW-1133">Transmembrane helix</keyword>
<keyword id="KW-0813">Transport</keyword>
<gene>
    <name evidence="1" type="primary">atpF1</name>
    <name type="ordered locus">Mmar10_2203</name>
</gene>
<protein>
    <recommendedName>
        <fullName evidence="1">ATP synthase subunit b 1</fullName>
    </recommendedName>
    <alternativeName>
        <fullName evidence="1">ATP synthase F(0) sector subunit b 1</fullName>
    </alternativeName>
    <alternativeName>
        <fullName evidence="1">ATPase subunit I 1</fullName>
    </alternativeName>
    <alternativeName>
        <fullName evidence="1">F-type ATPase subunit b 1</fullName>
        <shortName evidence="1">F-ATPase subunit b 1</shortName>
    </alternativeName>
</protein>
<comment type="function">
    <text evidence="1">F(1)F(0) ATP synthase produces ATP from ADP in the presence of a proton or sodium gradient. F-type ATPases consist of two structural domains, F(1) containing the extramembraneous catalytic core and F(0) containing the membrane proton channel, linked together by a central stalk and a peripheral stalk. During catalysis, ATP synthesis in the catalytic domain of F(1) is coupled via a rotary mechanism of the central stalk subunits to proton translocation.</text>
</comment>
<comment type="function">
    <text evidence="1">Component of the F(0) channel, it forms part of the peripheral stalk, linking F(1) to F(0).</text>
</comment>
<comment type="subunit">
    <text evidence="1">F-type ATPases have 2 components, F(1) - the catalytic core - and F(0) - the membrane proton channel. F(1) has five subunits: alpha(3), beta(3), gamma(1), delta(1), epsilon(1). F(0) has three main subunits: a(1), b(2) and c(10-14). The alpha and beta chains form an alternating ring which encloses part of the gamma chain. F(1) is attached to F(0) by a central stalk formed by the gamma and epsilon chains, while a peripheral stalk is formed by the delta and b chains.</text>
</comment>
<comment type="subcellular location">
    <subcellularLocation>
        <location evidence="1">Cell inner membrane</location>
        <topology evidence="1">Single-pass membrane protein</topology>
    </subcellularLocation>
</comment>
<comment type="similarity">
    <text evidence="1">Belongs to the ATPase B chain family.</text>
</comment>